<name>ALF_SHIFL</name>
<organism>
    <name type="scientific">Shigella flexneri</name>
    <dbReference type="NCBI Taxonomy" id="623"/>
    <lineage>
        <taxon>Bacteria</taxon>
        <taxon>Pseudomonadati</taxon>
        <taxon>Pseudomonadota</taxon>
        <taxon>Gammaproteobacteria</taxon>
        <taxon>Enterobacterales</taxon>
        <taxon>Enterobacteriaceae</taxon>
        <taxon>Shigella</taxon>
    </lineage>
</organism>
<reference key="1">
    <citation type="journal article" date="2002" name="Nucleic Acids Res.">
        <title>Genome sequence of Shigella flexneri 2a: insights into pathogenicity through comparison with genomes of Escherichia coli K12 and O157.</title>
        <authorList>
            <person name="Jin Q."/>
            <person name="Yuan Z."/>
            <person name="Xu J."/>
            <person name="Wang Y."/>
            <person name="Shen Y."/>
            <person name="Lu W."/>
            <person name="Wang J."/>
            <person name="Liu H."/>
            <person name="Yang J."/>
            <person name="Yang F."/>
            <person name="Zhang X."/>
            <person name="Zhang J."/>
            <person name="Yang G."/>
            <person name="Wu H."/>
            <person name="Qu D."/>
            <person name="Dong J."/>
            <person name="Sun L."/>
            <person name="Xue Y."/>
            <person name="Zhao A."/>
            <person name="Gao Y."/>
            <person name="Zhu J."/>
            <person name="Kan B."/>
            <person name="Ding K."/>
            <person name="Chen S."/>
            <person name="Cheng H."/>
            <person name="Yao Z."/>
            <person name="He B."/>
            <person name="Chen R."/>
            <person name="Ma D."/>
            <person name="Qiang B."/>
            <person name="Wen Y."/>
            <person name="Hou Y."/>
            <person name="Yu J."/>
        </authorList>
    </citation>
    <scope>NUCLEOTIDE SEQUENCE [LARGE SCALE GENOMIC DNA]</scope>
    <source>
        <strain>301 / Serotype 2a</strain>
    </source>
</reference>
<reference key="2">
    <citation type="journal article" date="2003" name="Infect. Immun.">
        <title>Complete genome sequence and comparative genomics of Shigella flexneri serotype 2a strain 2457T.</title>
        <authorList>
            <person name="Wei J."/>
            <person name="Goldberg M.B."/>
            <person name="Burland V."/>
            <person name="Venkatesan M.M."/>
            <person name="Deng W."/>
            <person name="Fournier G."/>
            <person name="Mayhew G.F."/>
            <person name="Plunkett G. III"/>
            <person name="Rose D.J."/>
            <person name="Darling A."/>
            <person name="Mau B."/>
            <person name="Perna N.T."/>
            <person name="Payne S.M."/>
            <person name="Runyen-Janecky L.J."/>
            <person name="Zhou S."/>
            <person name="Schwartz D.C."/>
            <person name="Blattner F.R."/>
        </authorList>
    </citation>
    <scope>NUCLEOTIDE SEQUENCE [LARGE SCALE GENOMIC DNA]</scope>
    <source>
        <strain>ATCC 700930 / 2457T / Serotype 2a</strain>
    </source>
</reference>
<gene>
    <name type="primary">fbaA</name>
    <name type="ordered locus">SF2910</name>
    <name type="ordered locus">S3110</name>
</gene>
<comment type="function">
    <text evidence="1">Catalyzes the aldol condensation of dihydroxyacetone phosphate (DHAP or glycerone-phosphate) with glyceraldehyde 3-phosphate (G3P) to form fructose 1,6-bisphosphate (FBP) in gluconeogenesis and the reverse reaction in glycolysis.</text>
</comment>
<comment type="catalytic activity">
    <reaction>
        <text>beta-D-fructose 1,6-bisphosphate = D-glyceraldehyde 3-phosphate + dihydroxyacetone phosphate</text>
        <dbReference type="Rhea" id="RHEA:14729"/>
        <dbReference type="ChEBI" id="CHEBI:32966"/>
        <dbReference type="ChEBI" id="CHEBI:57642"/>
        <dbReference type="ChEBI" id="CHEBI:59776"/>
        <dbReference type="EC" id="4.1.2.13"/>
    </reaction>
</comment>
<comment type="cofactor">
    <cofactor evidence="1">
        <name>Zn(2+)</name>
        <dbReference type="ChEBI" id="CHEBI:29105"/>
    </cofactor>
    <text evidence="1">Binds 2 Zn(2+) ions per subunit. One is catalytic and the other provides a structural contribution.</text>
</comment>
<comment type="pathway">
    <text>Carbohydrate degradation; glycolysis; D-glyceraldehyde 3-phosphate and glycerone phosphate from D-glucose: step 4/4.</text>
</comment>
<comment type="subunit">
    <text evidence="1">Homodimer.</text>
</comment>
<comment type="similarity">
    <text evidence="2">Belongs to the class II fructose-bisphosphate aldolase family.</text>
</comment>
<keyword id="KW-0007">Acetylation</keyword>
<keyword id="KW-0324">Glycolysis</keyword>
<keyword id="KW-0456">Lyase</keyword>
<keyword id="KW-0479">Metal-binding</keyword>
<keyword id="KW-1185">Reference proteome</keyword>
<keyword id="KW-0862">Zinc</keyword>
<protein>
    <recommendedName>
        <fullName>Fructose-bisphosphate aldolase class 2</fullName>
        <shortName>FBP aldolase</shortName>
        <shortName>FBPA</shortName>
        <ecNumber>4.1.2.13</ecNumber>
    </recommendedName>
    <alternativeName>
        <fullName>Fructose-1,6-bisphosphate aldolase</fullName>
    </alternativeName>
    <alternativeName>
        <fullName>Fructose-bisphosphate aldolase class II</fullName>
    </alternativeName>
</protein>
<sequence>MSKIFDFVKPGVITGDDVQKVFQVAKENNFALPAVNCVGTDSINAVLETAAKVKAPVIVQFSNGGASFIAGKGVKSDVPQGAAILGAISGAHHVHQMAEHYGVPVILHTDHCAKKLLPWIDGLLDAGEKHFAATGKPLFSSHMIDLSEESLQENIEICSKYLERMSKIGMTLEIELGCTGGEEDGVDNSHMDASALYTQPEDVDYAYTELSKISPRFTIAASFGNVHGVYKPGNVVLTPTILRDSQEYVSKKHNLPHNSLNFVFHGGSGSTAQEIKDSVSYGVVKMNIDTDTQWATWEGVLNYYKANEAYLQGQLGNPKGEDQPNKKYYDPRVWLRAGQTSMIARLEKAFQELNAIDVL</sequence>
<accession>P0AB73</accession>
<accession>P11604</accession>
<feature type="initiator methionine" description="Removed" evidence="1">
    <location>
        <position position="1"/>
    </location>
</feature>
<feature type="chain" id="PRO_0000178734" description="Fructose-bisphosphate aldolase class 2">
    <location>
        <begin position="2"/>
        <end position="359"/>
    </location>
</feature>
<feature type="active site" description="Proton donor" evidence="1">
    <location>
        <position position="110"/>
    </location>
</feature>
<feature type="binding site" evidence="1">
    <location>
        <position position="62"/>
    </location>
    <ligand>
        <name>D-glyceraldehyde 3-phosphate</name>
        <dbReference type="ChEBI" id="CHEBI:59776"/>
    </ligand>
</feature>
<feature type="binding site" evidence="1">
    <location>
        <position position="111"/>
    </location>
    <ligand>
        <name>Zn(2+)</name>
        <dbReference type="ChEBI" id="CHEBI:29105"/>
        <label>1</label>
        <note>catalytic</note>
    </ligand>
</feature>
<feature type="binding site" evidence="1">
    <location>
        <position position="145"/>
    </location>
    <ligand>
        <name>Zn(2+)</name>
        <dbReference type="ChEBI" id="CHEBI:29105"/>
        <label>2</label>
    </ligand>
</feature>
<feature type="binding site" evidence="1">
    <location>
        <position position="175"/>
    </location>
    <ligand>
        <name>Zn(2+)</name>
        <dbReference type="ChEBI" id="CHEBI:29105"/>
        <label>2</label>
    </ligand>
</feature>
<feature type="binding site" evidence="1">
    <location>
        <position position="227"/>
    </location>
    <ligand>
        <name>Zn(2+)</name>
        <dbReference type="ChEBI" id="CHEBI:29105"/>
        <label>1</label>
        <note>catalytic</note>
    </ligand>
</feature>
<feature type="binding site" evidence="1">
    <location>
        <position position="228"/>
    </location>
    <ligand>
        <name>dihydroxyacetone phosphate</name>
        <dbReference type="ChEBI" id="CHEBI:57642"/>
    </ligand>
</feature>
<feature type="binding site" evidence="1">
    <location>
        <position position="265"/>
    </location>
    <ligand>
        <name>Zn(2+)</name>
        <dbReference type="ChEBI" id="CHEBI:29105"/>
        <label>1</label>
        <note>catalytic</note>
    </ligand>
</feature>
<feature type="binding site" evidence="1">
    <location>
        <begin position="266"/>
        <end position="268"/>
    </location>
    <ligand>
        <name>dihydroxyacetone phosphate</name>
        <dbReference type="ChEBI" id="CHEBI:57642"/>
    </ligand>
</feature>
<feature type="binding site" evidence="1">
    <location>
        <begin position="287"/>
        <end position="290"/>
    </location>
    <ligand>
        <name>dihydroxyacetone phosphate</name>
        <dbReference type="ChEBI" id="CHEBI:57642"/>
    </ligand>
</feature>
<feature type="modified residue" description="N6-acetyllysine" evidence="1">
    <location>
        <position position="9"/>
    </location>
</feature>
<dbReference type="EC" id="4.1.2.13"/>
<dbReference type="EMBL" id="AE005674">
    <property type="protein sequence ID" value="AAN44392.2"/>
    <property type="molecule type" value="Genomic_DNA"/>
</dbReference>
<dbReference type="EMBL" id="AE014073">
    <property type="protein sequence ID" value="AAP18214.1"/>
    <property type="molecule type" value="Genomic_DNA"/>
</dbReference>
<dbReference type="RefSeq" id="WP_000034372.1">
    <property type="nucleotide sequence ID" value="NZ_WPGW01000018.1"/>
</dbReference>
<dbReference type="SMR" id="P0AB73"/>
<dbReference type="STRING" id="198214.SF2910"/>
<dbReference type="PaxDb" id="198214-SF2910"/>
<dbReference type="GeneID" id="93779073"/>
<dbReference type="KEGG" id="sfl:SF2910"/>
<dbReference type="KEGG" id="sfx:S3110"/>
<dbReference type="PATRIC" id="fig|198214.7.peg.3461"/>
<dbReference type="HOGENOM" id="CLU_036923_0_0_6"/>
<dbReference type="UniPathway" id="UPA00109">
    <property type="reaction ID" value="UER00183"/>
</dbReference>
<dbReference type="Proteomes" id="UP000001006">
    <property type="component" value="Chromosome"/>
</dbReference>
<dbReference type="Proteomes" id="UP000002673">
    <property type="component" value="Chromosome"/>
</dbReference>
<dbReference type="GO" id="GO:0005829">
    <property type="term" value="C:cytosol"/>
    <property type="evidence" value="ECO:0007669"/>
    <property type="project" value="TreeGrafter"/>
</dbReference>
<dbReference type="GO" id="GO:0004332">
    <property type="term" value="F:fructose-bisphosphate aldolase activity"/>
    <property type="evidence" value="ECO:0007669"/>
    <property type="project" value="UniProtKB-EC"/>
</dbReference>
<dbReference type="GO" id="GO:0008270">
    <property type="term" value="F:zinc ion binding"/>
    <property type="evidence" value="ECO:0007669"/>
    <property type="project" value="InterPro"/>
</dbReference>
<dbReference type="GO" id="GO:0006094">
    <property type="term" value="P:gluconeogenesis"/>
    <property type="evidence" value="ECO:0007669"/>
    <property type="project" value="TreeGrafter"/>
</dbReference>
<dbReference type="GO" id="GO:0006096">
    <property type="term" value="P:glycolytic process"/>
    <property type="evidence" value="ECO:0007669"/>
    <property type="project" value="UniProtKB-UniPathway"/>
</dbReference>
<dbReference type="CDD" id="cd00946">
    <property type="entry name" value="FBP_aldolase_IIA"/>
    <property type="match status" value="1"/>
</dbReference>
<dbReference type="FunFam" id="3.20.20.70:FF:000013">
    <property type="entry name" value="Class II fructose-bisphosphate aldolase"/>
    <property type="match status" value="1"/>
</dbReference>
<dbReference type="Gene3D" id="3.20.20.70">
    <property type="entry name" value="Aldolase class I"/>
    <property type="match status" value="1"/>
</dbReference>
<dbReference type="InterPro" id="IPR013785">
    <property type="entry name" value="Aldolase_TIM"/>
</dbReference>
<dbReference type="InterPro" id="IPR000771">
    <property type="entry name" value="FBA_II"/>
</dbReference>
<dbReference type="InterPro" id="IPR006411">
    <property type="entry name" value="Fruct_bisP_bact"/>
</dbReference>
<dbReference type="NCBIfam" id="TIGR00167">
    <property type="entry name" value="cbbA"/>
    <property type="match status" value="1"/>
</dbReference>
<dbReference type="NCBIfam" id="TIGR01520">
    <property type="entry name" value="FruBisAldo_II_A"/>
    <property type="match status" value="1"/>
</dbReference>
<dbReference type="NCBIfam" id="NF006628">
    <property type="entry name" value="PRK09197.1"/>
    <property type="match status" value="1"/>
</dbReference>
<dbReference type="PANTHER" id="PTHR30559:SF0">
    <property type="entry name" value="FRUCTOSE-BISPHOSPHATE ALDOLASE"/>
    <property type="match status" value="1"/>
</dbReference>
<dbReference type="PANTHER" id="PTHR30559">
    <property type="entry name" value="FRUCTOSE-BISPHOSPHATE ALDOLASE CLASS 2"/>
    <property type="match status" value="1"/>
</dbReference>
<dbReference type="Pfam" id="PF01116">
    <property type="entry name" value="F_bP_aldolase"/>
    <property type="match status" value="1"/>
</dbReference>
<dbReference type="PIRSF" id="PIRSF001359">
    <property type="entry name" value="F_bP_aldolase_II"/>
    <property type="match status" value="1"/>
</dbReference>
<dbReference type="SUPFAM" id="SSF51569">
    <property type="entry name" value="Aldolase"/>
    <property type="match status" value="1"/>
</dbReference>
<dbReference type="PROSITE" id="PS00602">
    <property type="entry name" value="ALDOLASE_CLASS_II_1"/>
    <property type="match status" value="1"/>
</dbReference>
<dbReference type="PROSITE" id="PS00806">
    <property type="entry name" value="ALDOLASE_CLASS_II_2"/>
    <property type="match status" value="1"/>
</dbReference>
<evidence type="ECO:0000250" key="1"/>
<evidence type="ECO:0000305" key="2"/>
<proteinExistence type="inferred from homology"/>